<feature type="chain" id="PRO_0000216465" description="Probable oxaloacetate decarboxylase gamma chain">
    <location>
        <begin position="1"/>
        <end position="85"/>
    </location>
</feature>
<feature type="transmembrane region" description="Helical" evidence="1">
    <location>
        <begin position="11"/>
        <end position="33"/>
    </location>
</feature>
<name>OADG_VIBVY</name>
<comment type="function">
    <text evidence="1">Catalyzes the decarboxylation of oxaloacetate coupled to Na(+) translocation.</text>
</comment>
<comment type="catalytic activity">
    <reaction evidence="1">
        <text>oxaloacetate + 2 Na(+)(in) + H(+) = pyruvate + 2 Na(+)(out) + CO2</text>
        <dbReference type="Rhea" id="RHEA:57724"/>
        <dbReference type="ChEBI" id="CHEBI:15361"/>
        <dbReference type="ChEBI" id="CHEBI:15378"/>
        <dbReference type="ChEBI" id="CHEBI:16452"/>
        <dbReference type="ChEBI" id="CHEBI:16526"/>
        <dbReference type="ChEBI" id="CHEBI:29101"/>
        <dbReference type="EC" id="7.2.4.2"/>
    </reaction>
</comment>
<comment type="cofactor">
    <cofactor evidence="1">
        <name>Na(+)</name>
        <dbReference type="ChEBI" id="CHEBI:29101"/>
    </cofactor>
</comment>
<comment type="subunit">
    <text evidence="1">Heterotrimer of an alpha, a beta and a gamma subunit.</text>
</comment>
<comment type="subcellular location">
    <subcellularLocation>
        <location evidence="1">Cell membrane</location>
        <topology evidence="1">Single-pass membrane protein</topology>
    </subcellularLocation>
</comment>
<comment type="similarity">
    <text evidence="1">Belongs to the OadG family.</text>
</comment>
<comment type="sequence caution" evidence="2">
    <conflict type="erroneous initiation">
        <sequence resource="EMBL-CDS" id="BAC95564"/>
    </conflict>
</comment>
<gene>
    <name evidence="1" type="primary">oadG</name>
    <name type="ordered locus">VV2800</name>
</gene>
<sequence>MTNIGSLLVDAAALMVTGMGVVFIFLTILIFLVRLMSKLVPQEVPPPITAPKAVKNQANHTSTVSPQVVAAISAAIHQHRASVAK</sequence>
<dbReference type="EC" id="7.2.4.2" evidence="1"/>
<dbReference type="EMBL" id="BA000037">
    <property type="protein sequence ID" value="BAC95564.1"/>
    <property type="status" value="ALT_INIT"/>
    <property type="molecule type" value="Genomic_DNA"/>
</dbReference>
<dbReference type="RefSeq" id="WP_011079529.1">
    <property type="nucleotide sequence ID" value="NC_005139.1"/>
</dbReference>
<dbReference type="SMR" id="Q7MHR9"/>
<dbReference type="STRING" id="672.VV93_v1c25110"/>
<dbReference type="KEGG" id="vvy:VV2800"/>
<dbReference type="PATRIC" id="fig|196600.6.peg.2791"/>
<dbReference type="eggNOG" id="COG3630">
    <property type="taxonomic scope" value="Bacteria"/>
</dbReference>
<dbReference type="HOGENOM" id="CLU_168750_2_1_6"/>
<dbReference type="Proteomes" id="UP000002675">
    <property type="component" value="Chromosome I"/>
</dbReference>
<dbReference type="GO" id="GO:0005886">
    <property type="term" value="C:plasma membrane"/>
    <property type="evidence" value="ECO:0007669"/>
    <property type="project" value="UniProtKB-SubCell"/>
</dbReference>
<dbReference type="GO" id="GO:0015451">
    <property type="term" value="F:decarboxylation-driven active transmembrane transporter activity"/>
    <property type="evidence" value="ECO:0007669"/>
    <property type="project" value="UniProtKB-EC"/>
</dbReference>
<dbReference type="GO" id="GO:0008948">
    <property type="term" value="F:oxaloacetate decarboxylase activity"/>
    <property type="evidence" value="ECO:0007669"/>
    <property type="project" value="UniProtKB-UniRule"/>
</dbReference>
<dbReference type="GO" id="GO:0015081">
    <property type="term" value="F:sodium ion transmembrane transporter activity"/>
    <property type="evidence" value="ECO:0007669"/>
    <property type="project" value="UniProtKB-UniRule"/>
</dbReference>
<dbReference type="GO" id="GO:0036376">
    <property type="term" value="P:sodium ion export across plasma membrane"/>
    <property type="evidence" value="ECO:0007669"/>
    <property type="project" value="InterPro"/>
</dbReference>
<dbReference type="HAMAP" id="MF_00404">
    <property type="entry name" value="OadG"/>
    <property type="match status" value="1"/>
</dbReference>
<dbReference type="InterPro" id="IPR005899">
    <property type="entry name" value="Na_pump_deCOase"/>
</dbReference>
<dbReference type="InterPro" id="IPR023424">
    <property type="entry name" value="OadG"/>
</dbReference>
<dbReference type="NCBIfam" id="TIGR01195">
    <property type="entry name" value="oadG_fam"/>
    <property type="match status" value="1"/>
</dbReference>
<dbReference type="NCBIfam" id="NF003004">
    <property type="entry name" value="PRK03814.1"/>
    <property type="match status" value="1"/>
</dbReference>
<dbReference type="Pfam" id="PF04277">
    <property type="entry name" value="OAD_gamma"/>
    <property type="match status" value="1"/>
</dbReference>
<evidence type="ECO:0000255" key="1">
    <source>
        <dbReference type="HAMAP-Rule" id="MF_00404"/>
    </source>
</evidence>
<evidence type="ECO:0000305" key="2"/>
<protein>
    <recommendedName>
        <fullName evidence="1">Probable oxaloacetate decarboxylase gamma chain</fullName>
        <ecNumber evidence="1">7.2.4.2</ecNumber>
    </recommendedName>
</protein>
<proteinExistence type="inferred from homology"/>
<keyword id="KW-1003">Cell membrane</keyword>
<keyword id="KW-0406">Ion transport</keyword>
<keyword id="KW-0472">Membrane</keyword>
<keyword id="KW-0915">Sodium</keyword>
<keyword id="KW-0739">Sodium transport</keyword>
<keyword id="KW-1278">Translocase</keyword>
<keyword id="KW-0812">Transmembrane</keyword>
<keyword id="KW-1133">Transmembrane helix</keyword>
<keyword id="KW-0813">Transport</keyword>
<reference key="1">
    <citation type="journal article" date="2003" name="Genome Res.">
        <title>Comparative genome analysis of Vibrio vulnificus, a marine pathogen.</title>
        <authorList>
            <person name="Chen C.-Y."/>
            <person name="Wu K.-M."/>
            <person name="Chang Y.-C."/>
            <person name="Chang C.-H."/>
            <person name="Tsai H.-C."/>
            <person name="Liao T.-L."/>
            <person name="Liu Y.-M."/>
            <person name="Chen H.-J."/>
            <person name="Shen A.B.-T."/>
            <person name="Li J.-C."/>
            <person name="Su T.-L."/>
            <person name="Shao C.-P."/>
            <person name="Lee C.-T."/>
            <person name="Hor L.-I."/>
            <person name="Tsai S.-F."/>
        </authorList>
    </citation>
    <scope>NUCLEOTIDE SEQUENCE [LARGE SCALE GENOMIC DNA]</scope>
    <source>
        <strain>YJ016</strain>
    </source>
</reference>
<organism>
    <name type="scientific">Vibrio vulnificus (strain YJ016)</name>
    <dbReference type="NCBI Taxonomy" id="196600"/>
    <lineage>
        <taxon>Bacteria</taxon>
        <taxon>Pseudomonadati</taxon>
        <taxon>Pseudomonadota</taxon>
        <taxon>Gammaproteobacteria</taxon>
        <taxon>Vibrionales</taxon>
        <taxon>Vibrionaceae</taxon>
        <taxon>Vibrio</taxon>
    </lineage>
</organism>
<accession>Q7MHR9</accession>